<sequence length="133" mass="15094">MQRVTITLDDDLLETLDSLSQRRGYNNRSEAIRDILRSALAQEATQQHGTQGFAVLSYVYEHEKRDLASRIVSTQHHHHDLSVATLHVHINHDDCLEIAVLKGDMGDVQHFADDVIAQRGVRHGHLQCLPKED</sequence>
<proteinExistence type="inferred from homology"/>
<organism>
    <name type="scientific">Shigella dysenteriae serotype 1 (strain Sd197)</name>
    <dbReference type="NCBI Taxonomy" id="300267"/>
    <lineage>
        <taxon>Bacteria</taxon>
        <taxon>Pseudomonadati</taxon>
        <taxon>Pseudomonadota</taxon>
        <taxon>Gammaproteobacteria</taxon>
        <taxon>Enterobacterales</taxon>
        <taxon>Enterobacteriaceae</taxon>
        <taxon>Shigella</taxon>
    </lineage>
</organism>
<name>NIKR_SHIDS</name>
<reference key="1">
    <citation type="journal article" date="2005" name="Nucleic Acids Res.">
        <title>Genome dynamics and diversity of Shigella species, the etiologic agents of bacillary dysentery.</title>
        <authorList>
            <person name="Yang F."/>
            <person name="Yang J."/>
            <person name="Zhang X."/>
            <person name="Chen L."/>
            <person name="Jiang Y."/>
            <person name="Yan Y."/>
            <person name="Tang X."/>
            <person name="Wang J."/>
            <person name="Xiong Z."/>
            <person name="Dong J."/>
            <person name="Xue Y."/>
            <person name="Zhu Y."/>
            <person name="Xu X."/>
            <person name="Sun L."/>
            <person name="Chen S."/>
            <person name="Nie H."/>
            <person name="Peng J."/>
            <person name="Xu J."/>
            <person name="Wang Y."/>
            <person name="Yuan Z."/>
            <person name="Wen Y."/>
            <person name="Yao Z."/>
            <person name="Shen Y."/>
            <person name="Qiang B."/>
            <person name="Hou Y."/>
            <person name="Yu J."/>
            <person name="Jin Q."/>
        </authorList>
    </citation>
    <scope>NUCLEOTIDE SEQUENCE [LARGE SCALE GENOMIC DNA]</scope>
    <source>
        <strain>Sd197</strain>
    </source>
</reference>
<protein>
    <recommendedName>
        <fullName evidence="1">Nickel-responsive regulator</fullName>
    </recommendedName>
</protein>
<evidence type="ECO:0000255" key="1">
    <source>
        <dbReference type="HAMAP-Rule" id="MF_00476"/>
    </source>
</evidence>
<dbReference type="EMBL" id="CP000034">
    <property type="protein sequence ID" value="ABB63605.1"/>
    <property type="molecule type" value="Genomic_DNA"/>
</dbReference>
<dbReference type="RefSeq" id="WP_001190062.1">
    <property type="nucleotide sequence ID" value="NC_007606.1"/>
</dbReference>
<dbReference type="RefSeq" id="YP_405096.1">
    <property type="nucleotide sequence ID" value="NC_007606.1"/>
</dbReference>
<dbReference type="SMR" id="Q32AQ0"/>
<dbReference type="STRING" id="300267.SDY_3636"/>
<dbReference type="EnsemblBacteria" id="ABB63605">
    <property type="protein sequence ID" value="ABB63605"/>
    <property type="gene ID" value="SDY_3636"/>
</dbReference>
<dbReference type="GeneID" id="93778510"/>
<dbReference type="KEGG" id="sdy:SDY_3636"/>
<dbReference type="PATRIC" id="fig|300267.13.peg.4315"/>
<dbReference type="HOGENOM" id="CLU_113319_1_4_6"/>
<dbReference type="Proteomes" id="UP000002716">
    <property type="component" value="Chromosome"/>
</dbReference>
<dbReference type="GO" id="GO:0003700">
    <property type="term" value="F:DNA-binding transcription factor activity"/>
    <property type="evidence" value="ECO:0007669"/>
    <property type="project" value="UniProtKB-UniRule"/>
</dbReference>
<dbReference type="GO" id="GO:0016151">
    <property type="term" value="F:nickel cation binding"/>
    <property type="evidence" value="ECO:0007669"/>
    <property type="project" value="UniProtKB-UniRule"/>
</dbReference>
<dbReference type="GO" id="GO:0043565">
    <property type="term" value="F:sequence-specific DNA binding"/>
    <property type="evidence" value="ECO:0007669"/>
    <property type="project" value="UniProtKB-ARBA"/>
</dbReference>
<dbReference type="GO" id="GO:0010045">
    <property type="term" value="P:response to nickel cation"/>
    <property type="evidence" value="ECO:0007669"/>
    <property type="project" value="InterPro"/>
</dbReference>
<dbReference type="CDD" id="cd22231">
    <property type="entry name" value="RHH_NikR_HicB-like"/>
    <property type="match status" value="1"/>
</dbReference>
<dbReference type="FunFam" id="1.10.1220.10:FF:000001">
    <property type="entry name" value="Nickel-responsive regulator"/>
    <property type="match status" value="1"/>
</dbReference>
<dbReference type="FunFam" id="3.30.70.1150:FF:000002">
    <property type="entry name" value="Nickel-responsive regulator"/>
    <property type="match status" value="1"/>
</dbReference>
<dbReference type="Gene3D" id="3.30.70.1150">
    <property type="entry name" value="ACT-like. Chain A, domain 2"/>
    <property type="match status" value="1"/>
</dbReference>
<dbReference type="Gene3D" id="1.10.1220.10">
    <property type="entry name" value="Met repressor-like"/>
    <property type="match status" value="1"/>
</dbReference>
<dbReference type="HAMAP" id="MF_00476">
    <property type="entry name" value="NikR"/>
    <property type="match status" value="1"/>
</dbReference>
<dbReference type="InterPro" id="IPR027271">
    <property type="entry name" value="Acetolactate_synth/TF_NikR_C"/>
</dbReference>
<dbReference type="InterPro" id="IPR045865">
    <property type="entry name" value="ACT-like_dom_sf"/>
</dbReference>
<dbReference type="InterPro" id="IPR013321">
    <property type="entry name" value="Arc_rbn_hlx_hlx"/>
</dbReference>
<dbReference type="InterPro" id="IPR002145">
    <property type="entry name" value="CopG"/>
</dbReference>
<dbReference type="InterPro" id="IPR050192">
    <property type="entry name" value="CopG/NikR_regulator"/>
</dbReference>
<dbReference type="InterPro" id="IPR022988">
    <property type="entry name" value="Ni_resp_reg_NikR"/>
</dbReference>
<dbReference type="InterPro" id="IPR014160">
    <property type="entry name" value="Nickel_NikR_proteobac"/>
</dbReference>
<dbReference type="InterPro" id="IPR010985">
    <property type="entry name" value="Ribbon_hlx_hlx"/>
</dbReference>
<dbReference type="InterPro" id="IPR014864">
    <property type="entry name" value="TF_NikR_Ni-bd_C"/>
</dbReference>
<dbReference type="NCBIfam" id="TIGR02793">
    <property type="entry name" value="nikR"/>
    <property type="match status" value="1"/>
</dbReference>
<dbReference type="NCBIfam" id="NF002815">
    <property type="entry name" value="PRK02967.1"/>
    <property type="match status" value="1"/>
</dbReference>
<dbReference type="NCBIfam" id="NF003381">
    <property type="entry name" value="PRK04460.1"/>
    <property type="match status" value="1"/>
</dbReference>
<dbReference type="PANTHER" id="PTHR34719">
    <property type="entry name" value="NICKEL-RESPONSIVE REGULATOR"/>
    <property type="match status" value="1"/>
</dbReference>
<dbReference type="PANTHER" id="PTHR34719:SF2">
    <property type="entry name" value="NICKEL-RESPONSIVE REGULATOR"/>
    <property type="match status" value="1"/>
</dbReference>
<dbReference type="Pfam" id="PF08753">
    <property type="entry name" value="NikR_C"/>
    <property type="match status" value="1"/>
</dbReference>
<dbReference type="Pfam" id="PF01402">
    <property type="entry name" value="RHH_1"/>
    <property type="match status" value="1"/>
</dbReference>
<dbReference type="SUPFAM" id="SSF55021">
    <property type="entry name" value="ACT-like"/>
    <property type="match status" value="1"/>
</dbReference>
<dbReference type="SUPFAM" id="SSF47598">
    <property type="entry name" value="Ribbon-helix-helix"/>
    <property type="match status" value="1"/>
</dbReference>
<comment type="function">
    <text evidence="1">Transcriptional repressor of the nikABCDE operon. Is active in the presence of excessive concentrations of intracellular nickel.</text>
</comment>
<comment type="cofactor">
    <cofactor evidence="1">
        <name>Ni(2+)</name>
        <dbReference type="ChEBI" id="CHEBI:49786"/>
    </cofactor>
    <text evidence="1">Binds 1 nickel ion per subunit.</text>
</comment>
<comment type="subunit">
    <text evidence="1">Homotetramer.</text>
</comment>
<comment type="similarity">
    <text evidence="1">Belongs to the transcriptional regulatory CopG/NikR family.</text>
</comment>
<accession>Q32AQ0</accession>
<keyword id="KW-0238">DNA-binding</keyword>
<keyword id="KW-0479">Metal-binding</keyword>
<keyword id="KW-0533">Nickel</keyword>
<keyword id="KW-1185">Reference proteome</keyword>
<keyword id="KW-0678">Repressor</keyword>
<keyword id="KW-0804">Transcription</keyword>
<keyword id="KW-0805">Transcription regulation</keyword>
<gene>
    <name evidence="1" type="primary">nikR</name>
    <name type="ordered locus">SDY_3636</name>
</gene>
<feature type="chain" id="PRO_1000014080" description="Nickel-responsive regulator">
    <location>
        <begin position="1"/>
        <end position="133"/>
    </location>
</feature>
<feature type="binding site" evidence="1">
    <location>
        <position position="76"/>
    </location>
    <ligand>
        <name>Ni(2+)</name>
        <dbReference type="ChEBI" id="CHEBI:49786"/>
    </ligand>
</feature>
<feature type="binding site" evidence="1">
    <location>
        <position position="87"/>
    </location>
    <ligand>
        <name>Ni(2+)</name>
        <dbReference type="ChEBI" id="CHEBI:49786"/>
    </ligand>
</feature>
<feature type="binding site" evidence="1">
    <location>
        <position position="89"/>
    </location>
    <ligand>
        <name>Ni(2+)</name>
        <dbReference type="ChEBI" id="CHEBI:49786"/>
    </ligand>
</feature>
<feature type="binding site" evidence="1">
    <location>
        <position position="95"/>
    </location>
    <ligand>
        <name>Ni(2+)</name>
        <dbReference type="ChEBI" id="CHEBI:49786"/>
    </ligand>
</feature>